<organism evidence="6">
    <name type="scientific">Caenorhabditis elegans</name>
    <dbReference type="NCBI Taxonomy" id="6239"/>
    <lineage>
        <taxon>Eukaryota</taxon>
        <taxon>Metazoa</taxon>
        <taxon>Ecdysozoa</taxon>
        <taxon>Nematoda</taxon>
        <taxon>Chromadorea</taxon>
        <taxon>Rhabditida</taxon>
        <taxon>Rhabditina</taxon>
        <taxon>Rhabditomorpha</taxon>
        <taxon>Rhabditoidea</taxon>
        <taxon>Rhabditidae</taxon>
        <taxon>Peloderinae</taxon>
        <taxon>Caenorhabditis</taxon>
    </lineage>
</organism>
<proteinExistence type="evidence at transcript level"/>
<gene>
    <name evidence="7" type="primary">sel-5</name>
    <name evidence="7" type="ORF">F35G12.3</name>
</gene>
<reference evidence="5" key="1">
    <citation type="journal article" date="1999" name="Genetics">
        <title>SEL-5, a serine/threonine kinase that facilitates lin-12 activity in Caenorhabditis elegans.</title>
        <authorList>
            <person name="Fares H."/>
            <person name="Greenwald I."/>
        </authorList>
    </citation>
    <scope>NUCLEOTIDE SEQUENCE [MRNA] (ISOFORMS A AND B)</scope>
    <scope>FUNCTION</scope>
    <scope>SUBCELLULAR LOCATION</scope>
    <scope>DISRUPTION PHENOTYPE</scope>
</reference>
<reference evidence="6" key="2">
    <citation type="journal article" date="1998" name="Science">
        <title>Genome sequence of the nematode C. elegans: a platform for investigating biology.</title>
        <authorList>
            <consortium name="The C. elegans sequencing consortium"/>
        </authorList>
    </citation>
    <scope>NUCLEOTIDE SEQUENCE [LARGE SCALE GENOMIC DNA]</scope>
    <source>
        <strain evidence="6">Bristol N2</strain>
    </source>
</reference>
<dbReference type="EC" id="2.7.11.1" evidence="4"/>
<dbReference type="EMBL" id="AF256466">
    <property type="protein sequence ID" value="AAF71545.1"/>
    <property type="molecule type" value="mRNA"/>
</dbReference>
<dbReference type="EMBL" id="AF256467">
    <property type="protein sequence ID" value="AAF71546.1"/>
    <property type="molecule type" value="mRNA"/>
</dbReference>
<dbReference type="EMBL" id="BX284603">
    <property type="protein sequence ID" value="CAA86326.1"/>
    <property type="molecule type" value="Genomic_DNA"/>
</dbReference>
<dbReference type="EMBL" id="BX284603">
    <property type="protein sequence ID" value="CAA86332.1"/>
    <property type="molecule type" value="Genomic_DNA"/>
</dbReference>
<dbReference type="PIR" id="T21800">
    <property type="entry name" value="T21800"/>
</dbReference>
<dbReference type="PIR" id="T21806">
    <property type="entry name" value="T21806"/>
</dbReference>
<dbReference type="RefSeq" id="NP_001022562.1">
    <molecule id="G5ECQ3-1"/>
    <property type="nucleotide sequence ID" value="NM_001027391.9"/>
</dbReference>
<dbReference type="RefSeq" id="NP_001022563.1">
    <molecule id="G5ECQ3-2"/>
    <property type="nucleotide sequence ID" value="NM_001027392.6"/>
</dbReference>
<dbReference type="SMR" id="G5ECQ3"/>
<dbReference type="FunCoup" id="G5ECQ3">
    <property type="interactions" value="363"/>
</dbReference>
<dbReference type="IntAct" id="G5ECQ3">
    <property type="interactions" value="2"/>
</dbReference>
<dbReference type="STRING" id="6239.F35G12.3a.2"/>
<dbReference type="PaxDb" id="6239-F35G12.3a"/>
<dbReference type="PeptideAtlas" id="G5ECQ3"/>
<dbReference type="EnsemblMetazoa" id="F35G12.3a.1">
    <molecule id="G5ECQ3-1"/>
    <property type="protein sequence ID" value="F35G12.3a.1"/>
    <property type="gene ID" value="WBGene00004762"/>
</dbReference>
<dbReference type="EnsemblMetazoa" id="F35G12.3b.1">
    <molecule id="G5ECQ3-2"/>
    <property type="protein sequence ID" value="F35G12.3b.1"/>
    <property type="gene ID" value="WBGene00004762"/>
</dbReference>
<dbReference type="GeneID" id="175599"/>
<dbReference type="KEGG" id="cel:CELE_F35G12.3"/>
<dbReference type="AGR" id="WB:WBGene00004762"/>
<dbReference type="CTD" id="175599"/>
<dbReference type="WormBase" id="F35G12.3a">
    <molecule id="G5ECQ3-1"/>
    <property type="protein sequence ID" value="CE00971"/>
    <property type="gene ID" value="WBGene00004762"/>
    <property type="gene designation" value="sel-5"/>
</dbReference>
<dbReference type="WormBase" id="F35G12.3b">
    <molecule id="G5ECQ3-2"/>
    <property type="protein sequence ID" value="CE00972"/>
    <property type="gene ID" value="WBGene00004762"/>
    <property type="gene designation" value="sel-5"/>
</dbReference>
<dbReference type="eggNOG" id="KOG1989">
    <property type="taxonomic scope" value="Eukaryota"/>
</dbReference>
<dbReference type="GeneTree" id="ENSGT00940000170379"/>
<dbReference type="HOGENOM" id="CLU_286560_0_0_1"/>
<dbReference type="InParanoid" id="G5ECQ3"/>
<dbReference type="OMA" id="RYSYENI"/>
<dbReference type="OrthoDB" id="2018507at2759"/>
<dbReference type="PhylomeDB" id="G5ECQ3"/>
<dbReference type="SignaLink" id="G5ECQ3"/>
<dbReference type="PRO" id="PR:G5ECQ3"/>
<dbReference type="Proteomes" id="UP000001940">
    <property type="component" value="Chromosome III"/>
</dbReference>
<dbReference type="Bgee" id="WBGene00004762">
    <property type="expression patterns" value="Expressed in germ line (C elegans) and 4 other cell types or tissues"/>
</dbReference>
<dbReference type="GO" id="GO:0005737">
    <property type="term" value="C:cytoplasm"/>
    <property type="evidence" value="ECO:0000318"/>
    <property type="project" value="GO_Central"/>
</dbReference>
<dbReference type="GO" id="GO:0035612">
    <property type="term" value="F:AP-2 adaptor complex binding"/>
    <property type="evidence" value="ECO:0000318"/>
    <property type="project" value="GO_Central"/>
</dbReference>
<dbReference type="GO" id="GO:0005524">
    <property type="term" value="F:ATP binding"/>
    <property type="evidence" value="ECO:0007669"/>
    <property type="project" value="UniProtKB-KW"/>
</dbReference>
<dbReference type="GO" id="GO:0046872">
    <property type="term" value="F:metal ion binding"/>
    <property type="evidence" value="ECO:0007669"/>
    <property type="project" value="UniProtKB-KW"/>
</dbReference>
<dbReference type="GO" id="GO:0106310">
    <property type="term" value="F:protein serine kinase activity"/>
    <property type="evidence" value="ECO:0007669"/>
    <property type="project" value="RHEA"/>
</dbReference>
<dbReference type="GO" id="GO:0004674">
    <property type="term" value="F:protein serine/threonine kinase activity"/>
    <property type="evidence" value="ECO:0000318"/>
    <property type="project" value="GO_Central"/>
</dbReference>
<dbReference type="GO" id="GO:0045747">
    <property type="term" value="P:positive regulation of Notch signaling pathway"/>
    <property type="evidence" value="ECO:0000318"/>
    <property type="project" value="GO_Central"/>
</dbReference>
<dbReference type="GO" id="GO:2000369">
    <property type="term" value="P:regulation of clathrin-dependent endocytosis"/>
    <property type="evidence" value="ECO:0000318"/>
    <property type="project" value="GO_Central"/>
</dbReference>
<dbReference type="CDD" id="cd14037">
    <property type="entry name" value="STKc_NAK_like"/>
    <property type="match status" value="1"/>
</dbReference>
<dbReference type="Gene3D" id="1.10.510.10">
    <property type="entry name" value="Transferase(Phosphotransferase) domain 1"/>
    <property type="match status" value="1"/>
</dbReference>
<dbReference type="InterPro" id="IPR011009">
    <property type="entry name" value="Kinase-like_dom_sf"/>
</dbReference>
<dbReference type="InterPro" id="IPR000719">
    <property type="entry name" value="Prot_kinase_dom"/>
</dbReference>
<dbReference type="InterPro" id="IPR008271">
    <property type="entry name" value="Ser/Thr_kinase_AS"/>
</dbReference>
<dbReference type="PANTHER" id="PTHR22967:SF57">
    <property type="entry name" value="AUXILIN, ISOFORM A-RELATED"/>
    <property type="match status" value="1"/>
</dbReference>
<dbReference type="PANTHER" id="PTHR22967">
    <property type="entry name" value="SERINE/THREONINE PROTEIN KINASE"/>
    <property type="match status" value="1"/>
</dbReference>
<dbReference type="Pfam" id="PF00069">
    <property type="entry name" value="Pkinase"/>
    <property type="match status" value="1"/>
</dbReference>
<dbReference type="SMART" id="SM00220">
    <property type="entry name" value="S_TKc"/>
    <property type="match status" value="1"/>
</dbReference>
<dbReference type="SUPFAM" id="SSF56112">
    <property type="entry name" value="Protein kinase-like (PK-like)"/>
    <property type="match status" value="1"/>
</dbReference>
<dbReference type="PROSITE" id="PS50011">
    <property type="entry name" value="PROTEIN_KINASE_DOM"/>
    <property type="match status" value="1"/>
</dbReference>
<dbReference type="PROSITE" id="PS00108">
    <property type="entry name" value="PROTEIN_KINASE_ST"/>
    <property type="match status" value="1"/>
</dbReference>
<comment type="function">
    <text evidence="3">Serine/threonine-protein kinase which may play a role in lin-12-mediated cell-fate decisions.</text>
</comment>
<comment type="catalytic activity">
    <reaction evidence="4">
        <text>L-seryl-[protein] + ATP = O-phospho-L-seryl-[protein] + ADP + H(+)</text>
        <dbReference type="Rhea" id="RHEA:17989"/>
        <dbReference type="Rhea" id="RHEA-COMP:9863"/>
        <dbReference type="Rhea" id="RHEA-COMP:11604"/>
        <dbReference type="ChEBI" id="CHEBI:15378"/>
        <dbReference type="ChEBI" id="CHEBI:29999"/>
        <dbReference type="ChEBI" id="CHEBI:30616"/>
        <dbReference type="ChEBI" id="CHEBI:83421"/>
        <dbReference type="ChEBI" id="CHEBI:456216"/>
        <dbReference type="EC" id="2.7.11.1"/>
    </reaction>
</comment>
<comment type="catalytic activity">
    <reaction evidence="4">
        <text>L-threonyl-[protein] + ATP = O-phospho-L-threonyl-[protein] + ADP + H(+)</text>
        <dbReference type="Rhea" id="RHEA:46608"/>
        <dbReference type="Rhea" id="RHEA-COMP:11060"/>
        <dbReference type="Rhea" id="RHEA-COMP:11605"/>
        <dbReference type="ChEBI" id="CHEBI:15378"/>
        <dbReference type="ChEBI" id="CHEBI:30013"/>
        <dbReference type="ChEBI" id="CHEBI:30616"/>
        <dbReference type="ChEBI" id="CHEBI:61977"/>
        <dbReference type="ChEBI" id="CHEBI:456216"/>
        <dbReference type="EC" id="2.7.11.1"/>
    </reaction>
</comment>
<comment type="cofactor">
    <cofactor evidence="4">
        <name>Mg(2+)</name>
        <dbReference type="ChEBI" id="CHEBI:18420"/>
    </cofactor>
</comment>
<comment type="subcellular location">
    <molecule>Isoform a</molecule>
    <subcellularLocation>
        <location evidence="3">Cytoplasm</location>
    </subcellularLocation>
</comment>
<comment type="alternative products">
    <event type="alternative splicing"/>
    <isoform>
        <id>G5ECQ3-1</id>
        <name evidence="7">a</name>
        <sequence type="displayed"/>
    </isoform>
    <isoform>
        <id>G5ECQ3-2</id>
        <name evidence="8">b</name>
        <sequence type="described" ref="VSP_058058 VSP_058059"/>
    </isoform>
</comment>
<comment type="disruption phenotype">
    <text evidence="3">No obvious phenotype. RNAi-mediated knockdown suppresses the egg laying defect of lin-12 n302 mutant. A similar phenotype occurs in a lin-12 and sel-5 double mutant.</text>
</comment>
<comment type="similarity">
    <text evidence="1">Belongs to the protein kinase superfamily. Ser/Thr protein kinase family.</text>
</comment>
<name>SEL5_CAEEL</name>
<protein>
    <recommendedName>
        <fullName evidence="4">Serine/threonine-protein kinase sel-5</fullName>
        <ecNumber evidence="4">2.7.11.1</ecNumber>
    </recommendedName>
    <alternativeName>
        <fullName evidence="4">Suppressor/enhancer of lin-12 protein 5</fullName>
    </alternativeName>
</protein>
<sequence>MPLGLFSSGKAQVLCDEKIPGGKKKEPKQLSENKCKGVTLKLDHTRVTIEKQIAEGGFAIVYVASDRKNNKFALKRQFTKDNEKQLEACCREHSFLKQCIGHKNIVEFVDSYTNCLGNGIWECMLLTEYHQKNVLQLMNERISQNQYLTNDEILSIFTDLCEAVSFIHNRPQPIIHRDLKVENVLISSHKPPHYVLCDFGSATTQILSVEKYGVEYVKSEVERNTTMCYRSPEMIDFYSGLEIGLKSDIWALGVLLYRLCFFCVPFEESPLAIQSVNYQFPSVPNIPDEIKVLIYMLLDIDVNRRPSIYQTSVLAFEANHRKPLSEEIQNKKCTDAVPSLKSCIQLMRDGSNPRNKRDSSPRNPEAPPIQSSSKMASLSQQVPSISNISMPSGSGTVETSVAPRLRPKATTVVPNVPSISPVPPVGLPHLRLPSKGSTDETDGSQVRKVPIDFHHRQSFSGEEQLKPAAEADSAGPLSCPLIKPTDLGFTDLDKPALPRDRAQTDGKRRLPHESDIIFQQQHRRNVSDTSQISRSAFKPYSSQQTTSKTSSQVVRSVEDMSQRQNGGSGEWNPFLVAPFSNNSISRKDGQESAFMMDDSHFGMVFDEIRRKEIPAELDSETSSIDSRDPFGAAPFDQLTVSTSSSAQPVSLPPATDEDDERQLLSETDEEEKYEIDEKEEIQTKKDETINEEDSEIDEQRMNDRRRYSYENIDGVGDDASSDSRGKTDRDDSEEEEDDDSRRGGDTSHDEDSQNTVGSEDGEGGSRPLLEDDGLEDDDDHELISSFSSSSTNYPPLFIGTSTPHTQNPITNPFLRDELTPKMIITAPLPTAKNNLDDDWDLGDRWTDRRDTVFERPASEHQNVFAPATLPRQATPLVCRFKPDLPTAAPVSIIPSMSNTSFPEAVRDSDTVPCEPIIGTLISVGAPTDPPPPPLPKKPTEASPTQETTATIPVALGKKEKLLKKEKKKEKKDGKKDKLKLEEYREKGSSEPETDGSEAEIWTNDGATTFSNKKKKKSTFGLRSSHPSIVANDLQFSSPMPPVVKKSSKDKKSSLTGKNASFVNTSFQPEDHDDPTDL</sequence>
<keyword id="KW-0025">Alternative splicing</keyword>
<keyword id="KW-0067">ATP-binding</keyword>
<keyword id="KW-0963">Cytoplasm</keyword>
<keyword id="KW-0418">Kinase</keyword>
<keyword id="KW-0460">Magnesium</keyword>
<keyword id="KW-0479">Metal-binding</keyword>
<keyword id="KW-0547">Nucleotide-binding</keyword>
<keyword id="KW-1185">Reference proteome</keyword>
<keyword id="KW-0723">Serine/threonine-protein kinase</keyword>
<keyword id="KW-0808">Transferase</keyword>
<accession>G5ECQ3</accession>
<accession>G5EFY9</accession>
<feature type="chain" id="PRO_0000435371" description="Serine/threonine-protein kinase sel-5" evidence="4">
    <location>
        <begin position="1"/>
        <end position="1077"/>
    </location>
</feature>
<feature type="domain" description="Protein kinase" evidence="1">
    <location>
        <begin position="47"/>
        <end position="317"/>
    </location>
</feature>
<feature type="region of interest" description="Disordered" evidence="2">
    <location>
        <begin position="347"/>
        <end position="444"/>
    </location>
</feature>
<feature type="region of interest" description="Disordered" evidence="2">
    <location>
        <begin position="488"/>
        <end position="554"/>
    </location>
</feature>
<feature type="region of interest" description="Disordered" evidence="2">
    <location>
        <begin position="616"/>
        <end position="813"/>
    </location>
</feature>
<feature type="region of interest" description="Disordered" evidence="2">
    <location>
        <begin position="920"/>
        <end position="1077"/>
    </location>
</feature>
<feature type="compositionally biased region" description="Polar residues" evidence="2">
    <location>
        <begin position="369"/>
        <end position="399"/>
    </location>
</feature>
<feature type="compositionally biased region" description="Basic and acidic residues" evidence="2">
    <location>
        <begin position="491"/>
        <end position="515"/>
    </location>
</feature>
<feature type="compositionally biased region" description="Low complexity" evidence="2">
    <location>
        <begin position="541"/>
        <end position="554"/>
    </location>
</feature>
<feature type="compositionally biased region" description="Polar residues" evidence="2">
    <location>
        <begin position="638"/>
        <end position="648"/>
    </location>
</feature>
<feature type="compositionally biased region" description="Acidic residues" evidence="2">
    <location>
        <begin position="655"/>
        <end position="679"/>
    </location>
</feature>
<feature type="compositionally biased region" description="Basic and acidic residues" evidence="2">
    <location>
        <begin position="697"/>
        <end position="708"/>
    </location>
</feature>
<feature type="compositionally biased region" description="Basic and acidic residues" evidence="2">
    <location>
        <begin position="739"/>
        <end position="751"/>
    </location>
</feature>
<feature type="compositionally biased region" description="Acidic residues" evidence="2">
    <location>
        <begin position="770"/>
        <end position="780"/>
    </location>
</feature>
<feature type="compositionally biased region" description="Polar residues" evidence="2">
    <location>
        <begin position="799"/>
        <end position="810"/>
    </location>
</feature>
<feature type="compositionally biased region" description="Pro residues" evidence="2">
    <location>
        <begin position="927"/>
        <end position="936"/>
    </location>
</feature>
<feature type="compositionally biased region" description="Polar residues" evidence="2">
    <location>
        <begin position="941"/>
        <end position="950"/>
    </location>
</feature>
<feature type="compositionally biased region" description="Basic residues" evidence="2">
    <location>
        <begin position="960"/>
        <end position="969"/>
    </location>
</feature>
<feature type="compositionally biased region" description="Basic and acidic residues" evidence="2">
    <location>
        <begin position="970"/>
        <end position="989"/>
    </location>
</feature>
<feature type="compositionally biased region" description="Polar residues" evidence="2">
    <location>
        <begin position="1054"/>
        <end position="1067"/>
    </location>
</feature>
<feature type="active site" description="Proton acceptor" evidence="1">
    <location>
        <position position="178"/>
    </location>
</feature>
<feature type="binding site" evidence="1">
    <location>
        <begin position="53"/>
        <end position="61"/>
    </location>
    <ligand>
        <name>ATP</name>
        <dbReference type="ChEBI" id="CHEBI:30616"/>
    </ligand>
</feature>
<feature type="binding site" evidence="1">
    <location>
        <position position="75"/>
    </location>
    <ligand>
        <name>ATP</name>
        <dbReference type="ChEBI" id="CHEBI:30616"/>
    </ligand>
</feature>
<feature type="splice variant" id="VSP_058058" description="In isoform b." evidence="4">
    <original>ATDEDDERQLLSETDEEEKYEIDEKEEIQTKKDETIN</original>
    <variation>GSVHLHTSIAPSPLLRHVLTKAPPPVPRRTTSRGFQV</variation>
    <location>
        <begin position="654"/>
        <end position="690"/>
    </location>
</feature>
<feature type="splice variant" id="VSP_058059" description="In isoform b." evidence="4">
    <location>
        <begin position="691"/>
        <end position="1077"/>
    </location>
</feature>
<evidence type="ECO:0000255" key="1">
    <source>
        <dbReference type="PROSITE-ProRule" id="PRU00159"/>
    </source>
</evidence>
<evidence type="ECO:0000256" key="2">
    <source>
        <dbReference type="SAM" id="MobiDB-lite"/>
    </source>
</evidence>
<evidence type="ECO:0000269" key="3">
    <source>
    </source>
</evidence>
<evidence type="ECO:0000305" key="4"/>
<evidence type="ECO:0000312" key="5">
    <source>
        <dbReference type="EMBL" id="AAF71545.1"/>
    </source>
</evidence>
<evidence type="ECO:0000312" key="6">
    <source>
        <dbReference type="Proteomes" id="UP000001940"/>
    </source>
</evidence>
<evidence type="ECO:0000312" key="7">
    <source>
        <dbReference type="WormBase" id="F35G12.3a"/>
    </source>
</evidence>
<evidence type="ECO:0000312" key="8">
    <source>
        <dbReference type="WormBase" id="F35G12.3b"/>
    </source>
</evidence>